<comment type="function">
    <text evidence="1">Probably phosphorylates lipids; the in vivo substrate is unknown.</text>
</comment>
<comment type="cofactor">
    <cofactor evidence="1">
        <name>Mg(2+)</name>
        <dbReference type="ChEBI" id="CHEBI:18420"/>
    </cofactor>
    <cofactor evidence="1">
        <name>Ca(2+)</name>
        <dbReference type="ChEBI" id="CHEBI:29108"/>
    </cofactor>
    <text evidence="1">Binds 1 Mg(2+) ion per subunit. Ca(2+) may be able to substitute.</text>
</comment>
<comment type="subcellular location">
    <subcellularLocation>
        <location evidence="1">Cytoplasm</location>
    </subcellularLocation>
</comment>
<comment type="similarity">
    <text evidence="1">Belongs to the diacylglycerol/lipid kinase family. YegS lipid kinase subfamily.</text>
</comment>
<sequence>MHPPAPALLIINGKGAGNEEVRLAVQKLRDENQTLHVRVTWEQGDAARYVQEACQLGVATLIAGGGDGTINEVAAALAALPAKGRPVLGILPLGTANDFAMACNIPLIPEQALRLAVKGRAVPIDLAKVNDQRYFINMATGGFGTRITTETPEKLKAALGGVSYFIHGLLRMDTLKADRCEIRGPDFHWSGDALVIGIGNGKQAGGGQQLCPDALINDGLLQLRLLTADELLPTLIASLFNDEENKNVIGAALPWLEIDAPHEMTFNLDGEPLKGRHFRIEVLPNAIECRLPPNCELLGQTQSSQ</sequence>
<accession>A8GHR8</accession>
<name>YEGS_SERP5</name>
<gene>
    <name type="ordered locus">Spro_3562</name>
</gene>
<organism>
    <name type="scientific">Serratia proteamaculans (strain 568)</name>
    <dbReference type="NCBI Taxonomy" id="399741"/>
    <lineage>
        <taxon>Bacteria</taxon>
        <taxon>Pseudomonadati</taxon>
        <taxon>Pseudomonadota</taxon>
        <taxon>Gammaproteobacteria</taxon>
        <taxon>Enterobacterales</taxon>
        <taxon>Yersiniaceae</taxon>
        <taxon>Serratia</taxon>
    </lineage>
</organism>
<feature type="chain" id="PRO_1000068255" description="Probable lipid kinase YegS-like">
    <location>
        <begin position="1"/>
        <end position="305"/>
    </location>
</feature>
<feature type="domain" description="DAGKc" evidence="1">
    <location>
        <begin position="2"/>
        <end position="134"/>
    </location>
</feature>
<feature type="active site" description="Proton acceptor" evidence="1">
    <location>
        <position position="271"/>
    </location>
</feature>
<feature type="binding site" evidence="1">
    <location>
        <position position="40"/>
    </location>
    <ligand>
        <name>ATP</name>
        <dbReference type="ChEBI" id="CHEBI:30616"/>
    </ligand>
</feature>
<feature type="binding site" evidence="1">
    <location>
        <begin position="66"/>
        <end position="72"/>
    </location>
    <ligand>
        <name>ATP</name>
        <dbReference type="ChEBI" id="CHEBI:30616"/>
    </ligand>
</feature>
<feature type="binding site" evidence="1">
    <location>
        <position position="95"/>
    </location>
    <ligand>
        <name>ATP</name>
        <dbReference type="ChEBI" id="CHEBI:30616"/>
    </ligand>
</feature>
<feature type="binding site" evidence="1">
    <location>
        <position position="215"/>
    </location>
    <ligand>
        <name>Mg(2+)</name>
        <dbReference type="ChEBI" id="CHEBI:18420"/>
    </ligand>
</feature>
<feature type="binding site" evidence="1">
    <location>
        <position position="218"/>
    </location>
    <ligand>
        <name>Mg(2+)</name>
        <dbReference type="ChEBI" id="CHEBI:18420"/>
    </ligand>
</feature>
<feature type="binding site" evidence="1">
    <location>
        <position position="220"/>
    </location>
    <ligand>
        <name>Mg(2+)</name>
        <dbReference type="ChEBI" id="CHEBI:18420"/>
    </ligand>
</feature>
<dbReference type="EC" id="2.7.1.-" evidence="1"/>
<dbReference type="EMBL" id="CP000826">
    <property type="protein sequence ID" value="ABV42658.1"/>
    <property type="molecule type" value="Genomic_DNA"/>
</dbReference>
<dbReference type="SMR" id="A8GHR8"/>
<dbReference type="STRING" id="399741.Spro_3562"/>
<dbReference type="KEGG" id="spe:Spro_3562"/>
<dbReference type="eggNOG" id="COG1597">
    <property type="taxonomic scope" value="Bacteria"/>
</dbReference>
<dbReference type="HOGENOM" id="CLU_045532_1_1_6"/>
<dbReference type="OrthoDB" id="142078at2"/>
<dbReference type="GO" id="GO:0005737">
    <property type="term" value="C:cytoplasm"/>
    <property type="evidence" value="ECO:0007669"/>
    <property type="project" value="UniProtKB-SubCell"/>
</dbReference>
<dbReference type="GO" id="GO:0005886">
    <property type="term" value="C:plasma membrane"/>
    <property type="evidence" value="ECO:0007669"/>
    <property type="project" value="TreeGrafter"/>
</dbReference>
<dbReference type="GO" id="GO:0005524">
    <property type="term" value="F:ATP binding"/>
    <property type="evidence" value="ECO:0007669"/>
    <property type="project" value="UniProtKB-UniRule"/>
</dbReference>
<dbReference type="GO" id="GO:0001727">
    <property type="term" value="F:lipid kinase activity"/>
    <property type="evidence" value="ECO:0007669"/>
    <property type="project" value="UniProtKB-UniRule"/>
</dbReference>
<dbReference type="GO" id="GO:0000287">
    <property type="term" value="F:magnesium ion binding"/>
    <property type="evidence" value="ECO:0007669"/>
    <property type="project" value="UniProtKB-UniRule"/>
</dbReference>
<dbReference type="GO" id="GO:0008654">
    <property type="term" value="P:phospholipid biosynthetic process"/>
    <property type="evidence" value="ECO:0007669"/>
    <property type="project" value="UniProtKB-UniRule"/>
</dbReference>
<dbReference type="Gene3D" id="2.60.200.40">
    <property type="match status" value="1"/>
</dbReference>
<dbReference type="Gene3D" id="3.40.50.10330">
    <property type="entry name" value="Probable inorganic polyphosphate/atp-NAD kinase, domain 1"/>
    <property type="match status" value="1"/>
</dbReference>
<dbReference type="HAMAP" id="MF_01377">
    <property type="entry name" value="YegS"/>
    <property type="match status" value="1"/>
</dbReference>
<dbReference type="InterPro" id="IPR017438">
    <property type="entry name" value="ATP-NAD_kinase_N"/>
</dbReference>
<dbReference type="InterPro" id="IPR005218">
    <property type="entry name" value="Diacylglycerol/lipid_kinase"/>
</dbReference>
<dbReference type="InterPro" id="IPR001206">
    <property type="entry name" value="Diacylglycerol_kinase_cat_dom"/>
</dbReference>
<dbReference type="InterPro" id="IPR022433">
    <property type="entry name" value="Lip_kinase_YegS"/>
</dbReference>
<dbReference type="InterPro" id="IPR050187">
    <property type="entry name" value="Lipid_Phosphate_FormReg"/>
</dbReference>
<dbReference type="InterPro" id="IPR016064">
    <property type="entry name" value="NAD/diacylglycerol_kinase_sf"/>
</dbReference>
<dbReference type="InterPro" id="IPR045540">
    <property type="entry name" value="YegS/DAGK_C"/>
</dbReference>
<dbReference type="NCBIfam" id="TIGR03702">
    <property type="entry name" value="lip_kinase_YegS"/>
    <property type="match status" value="1"/>
</dbReference>
<dbReference type="NCBIfam" id="NF009602">
    <property type="entry name" value="PRK13054.1"/>
    <property type="match status" value="1"/>
</dbReference>
<dbReference type="NCBIfam" id="TIGR00147">
    <property type="entry name" value="YegS/Rv2252/BmrU family lipid kinase"/>
    <property type="match status" value="1"/>
</dbReference>
<dbReference type="PANTHER" id="PTHR12358:SF106">
    <property type="entry name" value="LIPID KINASE YEGS"/>
    <property type="match status" value="1"/>
</dbReference>
<dbReference type="PANTHER" id="PTHR12358">
    <property type="entry name" value="SPHINGOSINE KINASE"/>
    <property type="match status" value="1"/>
</dbReference>
<dbReference type="Pfam" id="PF00781">
    <property type="entry name" value="DAGK_cat"/>
    <property type="match status" value="1"/>
</dbReference>
<dbReference type="Pfam" id="PF19279">
    <property type="entry name" value="YegS_C"/>
    <property type="match status" value="1"/>
</dbReference>
<dbReference type="SMART" id="SM00046">
    <property type="entry name" value="DAGKc"/>
    <property type="match status" value="1"/>
</dbReference>
<dbReference type="SUPFAM" id="SSF111331">
    <property type="entry name" value="NAD kinase/diacylglycerol kinase-like"/>
    <property type="match status" value="1"/>
</dbReference>
<dbReference type="PROSITE" id="PS50146">
    <property type="entry name" value="DAGK"/>
    <property type="match status" value="1"/>
</dbReference>
<protein>
    <recommendedName>
        <fullName evidence="1">Probable lipid kinase YegS-like</fullName>
        <ecNumber evidence="1">2.7.1.-</ecNumber>
    </recommendedName>
</protein>
<evidence type="ECO:0000255" key="1">
    <source>
        <dbReference type="HAMAP-Rule" id="MF_01377"/>
    </source>
</evidence>
<proteinExistence type="inferred from homology"/>
<keyword id="KW-0067">ATP-binding</keyword>
<keyword id="KW-0963">Cytoplasm</keyword>
<keyword id="KW-0418">Kinase</keyword>
<keyword id="KW-0444">Lipid biosynthesis</keyword>
<keyword id="KW-0443">Lipid metabolism</keyword>
<keyword id="KW-0460">Magnesium</keyword>
<keyword id="KW-0479">Metal-binding</keyword>
<keyword id="KW-0547">Nucleotide-binding</keyword>
<keyword id="KW-0594">Phospholipid biosynthesis</keyword>
<keyword id="KW-1208">Phospholipid metabolism</keyword>
<keyword id="KW-0808">Transferase</keyword>
<reference key="1">
    <citation type="submission" date="2007-09" db="EMBL/GenBank/DDBJ databases">
        <title>Complete sequence of chromosome of Serratia proteamaculans 568.</title>
        <authorList>
            <consortium name="US DOE Joint Genome Institute"/>
            <person name="Copeland A."/>
            <person name="Lucas S."/>
            <person name="Lapidus A."/>
            <person name="Barry K."/>
            <person name="Glavina del Rio T."/>
            <person name="Dalin E."/>
            <person name="Tice H."/>
            <person name="Pitluck S."/>
            <person name="Chain P."/>
            <person name="Malfatti S."/>
            <person name="Shin M."/>
            <person name="Vergez L."/>
            <person name="Schmutz J."/>
            <person name="Larimer F."/>
            <person name="Land M."/>
            <person name="Hauser L."/>
            <person name="Kyrpides N."/>
            <person name="Kim E."/>
            <person name="Taghavi S."/>
            <person name="Newman L."/>
            <person name="Vangronsveld J."/>
            <person name="van der Lelie D."/>
            <person name="Richardson P."/>
        </authorList>
    </citation>
    <scope>NUCLEOTIDE SEQUENCE [LARGE SCALE GENOMIC DNA]</scope>
    <source>
        <strain>568</strain>
    </source>
</reference>